<proteinExistence type="inferred from homology"/>
<name>NUOB_CAMHC</name>
<gene>
    <name evidence="2" type="primary">nuoB</name>
    <name type="ordered locus">CHAB381_0182</name>
</gene>
<dbReference type="EC" id="7.1.1.-" evidence="2"/>
<dbReference type="EMBL" id="CP000776">
    <property type="protein sequence ID" value="ABS51805.1"/>
    <property type="molecule type" value="Genomic_DNA"/>
</dbReference>
<dbReference type="SMR" id="A7HZU9"/>
<dbReference type="STRING" id="360107.CHAB381_0182"/>
<dbReference type="KEGG" id="cha:CHAB381_0182"/>
<dbReference type="eggNOG" id="COG0377">
    <property type="taxonomic scope" value="Bacteria"/>
</dbReference>
<dbReference type="HOGENOM" id="CLU_055737_7_3_7"/>
<dbReference type="OrthoDB" id="9786737at2"/>
<dbReference type="Proteomes" id="UP000002407">
    <property type="component" value="Chromosome"/>
</dbReference>
<dbReference type="GO" id="GO:0005886">
    <property type="term" value="C:plasma membrane"/>
    <property type="evidence" value="ECO:0007669"/>
    <property type="project" value="UniProtKB-SubCell"/>
</dbReference>
<dbReference type="GO" id="GO:0045271">
    <property type="term" value="C:respiratory chain complex I"/>
    <property type="evidence" value="ECO:0007669"/>
    <property type="project" value="TreeGrafter"/>
</dbReference>
<dbReference type="GO" id="GO:0051539">
    <property type="term" value="F:4 iron, 4 sulfur cluster binding"/>
    <property type="evidence" value="ECO:0007669"/>
    <property type="project" value="UniProtKB-KW"/>
</dbReference>
<dbReference type="GO" id="GO:0005506">
    <property type="term" value="F:iron ion binding"/>
    <property type="evidence" value="ECO:0007669"/>
    <property type="project" value="UniProtKB-UniRule"/>
</dbReference>
<dbReference type="GO" id="GO:0008137">
    <property type="term" value="F:NADH dehydrogenase (ubiquinone) activity"/>
    <property type="evidence" value="ECO:0007669"/>
    <property type="project" value="InterPro"/>
</dbReference>
<dbReference type="GO" id="GO:0050136">
    <property type="term" value="F:NADH:ubiquinone reductase (non-electrogenic) activity"/>
    <property type="evidence" value="ECO:0007669"/>
    <property type="project" value="UniProtKB-UniRule"/>
</dbReference>
<dbReference type="GO" id="GO:0048038">
    <property type="term" value="F:quinone binding"/>
    <property type="evidence" value="ECO:0007669"/>
    <property type="project" value="UniProtKB-KW"/>
</dbReference>
<dbReference type="GO" id="GO:0009060">
    <property type="term" value="P:aerobic respiration"/>
    <property type="evidence" value="ECO:0007669"/>
    <property type="project" value="TreeGrafter"/>
</dbReference>
<dbReference type="GO" id="GO:0015990">
    <property type="term" value="P:electron transport coupled proton transport"/>
    <property type="evidence" value="ECO:0007669"/>
    <property type="project" value="TreeGrafter"/>
</dbReference>
<dbReference type="FunFam" id="3.40.50.12280:FF:000002">
    <property type="entry name" value="NADH-quinone oxidoreductase subunit B"/>
    <property type="match status" value="1"/>
</dbReference>
<dbReference type="Gene3D" id="3.40.50.12280">
    <property type="match status" value="1"/>
</dbReference>
<dbReference type="HAMAP" id="MF_01356">
    <property type="entry name" value="NDH1_NuoB"/>
    <property type="match status" value="1"/>
</dbReference>
<dbReference type="InterPro" id="IPR006137">
    <property type="entry name" value="NADH_UbQ_OxRdtase-like_20kDa"/>
</dbReference>
<dbReference type="InterPro" id="IPR006138">
    <property type="entry name" value="NADH_UQ_OxRdtase_20Kd_su"/>
</dbReference>
<dbReference type="NCBIfam" id="TIGR01957">
    <property type="entry name" value="nuoB_fam"/>
    <property type="match status" value="1"/>
</dbReference>
<dbReference type="NCBIfam" id="NF005012">
    <property type="entry name" value="PRK06411.1"/>
    <property type="match status" value="1"/>
</dbReference>
<dbReference type="PANTHER" id="PTHR11995">
    <property type="entry name" value="NADH DEHYDROGENASE"/>
    <property type="match status" value="1"/>
</dbReference>
<dbReference type="PANTHER" id="PTHR11995:SF14">
    <property type="entry name" value="NADH DEHYDROGENASE [UBIQUINONE] IRON-SULFUR PROTEIN 7, MITOCHONDRIAL"/>
    <property type="match status" value="1"/>
</dbReference>
<dbReference type="Pfam" id="PF01058">
    <property type="entry name" value="Oxidored_q6"/>
    <property type="match status" value="1"/>
</dbReference>
<dbReference type="SUPFAM" id="SSF56770">
    <property type="entry name" value="HydA/Nqo6-like"/>
    <property type="match status" value="1"/>
</dbReference>
<organism>
    <name type="scientific">Campylobacter hominis (strain ATCC BAA-381 / DSM 21671 / CCUG 45161 / LMG 19568 / NCTC 13146 / CH001A)</name>
    <dbReference type="NCBI Taxonomy" id="360107"/>
    <lineage>
        <taxon>Bacteria</taxon>
        <taxon>Pseudomonadati</taxon>
        <taxon>Campylobacterota</taxon>
        <taxon>Epsilonproteobacteria</taxon>
        <taxon>Campylobacterales</taxon>
        <taxon>Campylobacteraceae</taxon>
        <taxon>Campylobacter</taxon>
    </lineage>
</organism>
<protein>
    <recommendedName>
        <fullName evidence="2">NADH-quinone oxidoreductase subunit B</fullName>
        <ecNumber evidence="2">7.1.1.-</ecNumber>
    </recommendedName>
    <alternativeName>
        <fullName evidence="2">NADH dehydrogenase I subunit B</fullName>
    </alternativeName>
    <alternativeName>
        <fullName evidence="2">NDH-1 subunit B</fullName>
    </alternativeName>
</protein>
<sequence>MAKHKIDYTRENGLPVVLTTIDKLVNWGRSNSLWAMNYGLACCAIEMMATGASRYDFDRFGTIFRASAKQSEVMVIAGTLSKKHAELARRLYDAMPEPKWVISMGSCANTGGMFNTYAVVQGCDRIIPVDIYLPGCAPRPETLQYALMILQKKIRREKANRNQLPKRLV</sequence>
<reference key="1">
    <citation type="submission" date="2007-07" db="EMBL/GenBank/DDBJ databases">
        <title>Complete genome sequence of Campylobacter hominis ATCC BAA-381, a commensal isolated from the human gastrointestinal tract.</title>
        <authorList>
            <person name="Fouts D.E."/>
            <person name="Mongodin E.F."/>
            <person name="Puiu D."/>
            <person name="Sebastian Y."/>
            <person name="Miller W.G."/>
            <person name="Mandrell R.E."/>
            <person name="Nelson K.E."/>
        </authorList>
    </citation>
    <scope>NUCLEOTIDE SEQUENCE [LARGE SCALE GENOMIC DNA]</scope>
    <source>
        <strain>ATCC BAA-381 / DSM 21671 / CCUG 45161 / LMG 19568 / NCTC 13146 / CH001A</strain>
    </source>
</reference>
<evidence type="ECO:0000250" key="1"/>
<evidence type="ECO:0000255" key="2">
    <source>
        <dbReference type="HAMAP-Rule" id="MF_01356"/>
    </source>
</evidence>
<feature type="chain" id="PRO_0000358392" description="NADH-quinone oxidoreductase subunit B">
    <location>
        <begin position="1"/>
        <end position="169"/>
    </location>
</feature>
<feature type="binding site" evidence="2">
    <location>
        <position position="42"/>
    </location>
    <ligand>
        <name>[4Fe-4S] cluster</name>
        <dbReference type="ChEBI" id="CHEBI:49883"/>
    </ligand>
</feature>
<feature type="binding site" evidence="2">
    <location>
        <position position="43"/>
    </location>
    <ligand>
        <name>[4Fe-4S] cluster</name>
        <dbReference type="ChEBI" id="CHEBI:49883"/>
    </ligand>
</feature>
<feature type="binding site" evidence="2">
    <location>
        <position position="107"/>
    </location>
    <ligand>
        <name>[4Fe-4S] cluster</name>
        <dbReference type="ChEBI" id="CHEBI:49883"/>
    </ligand>
</feature>
<feature type="binding site" evidence="2">
    <location>
        <position position="136"/>
    </location>
    <ligand>
        <name>[4Fe-4S] cluster</name>
        <dbReference type="ChEBI" id="CHEBI:49883"/>
    </ligand>
</feature>
<comment type="function">
    <text evidence="1">NDH-1 shuttles electrons from NADH, via FMN and iron-sulfur (Fe-S) centers, to quinones in the respiratory chain. Couples the redox reaction to proton translocation (for every two electrons transferred, four hydrogen ions are translocated across the cytoplasmic membrane), and thus conserves the redox energy in a proton gradient (By similarity).</text>
</comment>
<comment type="catalytic activity">
    <reaction evidence="2">
        <text>a quinone + NADH + 5 H(+)(in) = a quinol + NAD(+) + 4 H(+)(out)</text>
        <dbReference type="Rhea" id="RHEA:57888"/>
        <dbReference type="ChEBI" id="CHEBI:15378"/>
        <dbReference type="ChEBI" id="CHEBI:24646"/>
        <dbReference type="ChEBI" id="CHEBI:57540"/>
        <dbReference type="ChEBI" id="CHEBI:57945"/>
        <dbReference type="ChEBI" id="CHEBI:132124"/>
    </reaction>
</comment>
<comment type="cofactor">
    <cofactor evidence="2">
        <name>[4Fe-4S] cluster</name>
        <dbReference type="ChEBI" id="CHEBI:49883"/>
    </cofactor>
    <text evidence="2">Binds 1 [4Fe-4S] cluster.</text>
</comment>
<comment type="subunit">
    <text evidence="2">NDH-1 is composed of 14 different subunits. Subunits NuoB, C, D, E, F, and G constitute the peripheral sector of the complex.</text>
</comment>
<comment type="subcellular location">
    <subcellularLocation>
        <location evidence="2">Cell inner membrane</location>
        <topology evidence="2">Peripheral membrane protein</topology>
        <orientation evidence="2">Cytoplasmic side</orientation>
    </subcellularLocation>
</comment>
<comment type="similarity">
    <text evidence="2">Belongs to the complex I 20 kDa subunit family.</text>
</comment>
<keyword id="KW-0004">4Fe-4S</keyword>
<keyword id="KW-0997">Cell inner membrane</keyword>
<keyword id="KW-1003">Cell membrane</keyword>
<keyword id="KW-0408">Iron</keyword>
<keyword id="KW-0411">Iron-sulfur</keyword>
<keyword id="KW-0472">Membrane</keyword>
<keyword id="KW-0479">Metal-binding</keyword>
<keyword id="KW-0520">NAD</keyword>
<keyword id="KW-0874">Quinone</keyword>
<keyword id="KW-1185">Reference proteome</keyword>
<keyword id="KW-1278">Translocase</keyword>
<keyword id="KW-0813">Transport</keyword>
<keyword id="KW-0830">Ubiquinone</keyword>
<accession>A7HZU9</accession>